<protein>
    <recommendedName>
        <fullName evidence="1">Protein GrpE</fullName>
    </recommendedName>
    <alternativeName>
        <fullName evidence="1">HSP-70 cofactor</fullName>
    </alternativeName>
</protein>
<organism>
    <name type="scientific">Acinetobacter baylyi (strain ATCC 33305 / BD413 / ADP1)</name>
    <dbReference type="NCBI Taxonomy" id="62977"/>
    <lineage>
        <taxon>Bacteria</taxon>
        <taxon>Pseudomonadati</taxon>
        <taxon>Pseudomonadota</taxon>
        <taxon>Gammaproteobacteria</taxon>
        <taxon>Moraxellales</taxon>
        <taxon>Moraxellaceae</taxon>
        <taxon>Acinetobacter</taxon>
    </lineage>
</organism>
<proteinExistence type="inferred from homology"/>
<name>GRPE_ACIAD</name>
<dbReference type="EMBL" id="CR543861">
    <property type="protein sequence ID" value="CAG70283.1"/>
    <property type="molecule type" value="Genomic_DNA"/>
</dbReference>
<dbReference type="RefSeq" id="WP_004930153.1">
    <property type="nucleotide sequence ID" value="NC_005966.1"/>
</dbReference>
<dbReference type="SMR" id="Q6F6N4"/>
<dbReference type="STRING" id="202950.GCA_001485005_03204"/>
<dbReference type="GeneID" id="45235815"/>
<dbReference type="KEGG" id="aci:ACIAD3652"/>
<dbReference type="eggNOG" id="COG0576">
    <property type="taxonomic scope" value="Bacteria"/>
</dbReference>
<dbReference type="HOGENOM" id="CLU_057217_6_0_6"/>
<dbReference type="OrthoDB" id="9789811at2"/>
<dbReference type="BioCyc" id="ASP62977:ACIAD_RS16525-MONOMER"/>
<dbReference type="Proteomes" id="UP000000430">
    <property type="component" value="Chromosome"/>
</dbReference>
<dbReference type="GO" id="GO:0005829">
    <property type="term" value="C:cytosol"/>
    <property type="evidence" value="ECO:0007669"/>
    <property type="project" value="TreeGrafter"/>
</dbReference>
<dbReference type="GO" id="GO:0000774">
    <property type="term" value="F:adenyl-nucleotide exchange factor activity"/>
    <property type="evidence" value="ECO:0007669"/>
    <property type="project" value="InterPro"/>
</dbReference>
<dbReference type="GO" id="GO:0042803">
    <property type="term" value="F:protein homodimerization activity"/>
    <property type="evidence" value="ECO:0007669"/>
    <property type="project" value="InterPro"/>
</dbReference>
<dbReference type="GO" id="GO:0051087">
    <property type="term" value="F:protein-folding chaperone binding"/>
    <property type="evidence" value="ECO:0007669"/>
    <property type="project" value="InterPro"/>
</dbReference>
<dbReference type="GO" id="GO:0051082">
    <property type="term" value="F:unfolded protein binding"/>
    <property type="evidence" value="ECO:0007669"/>
    <property type="project" value="TreeGrafter"/>
</dbReference>
<dbReference type="GO" id="GO:0006457">
    <property type="term" value="P:protein folding"/>
    <property type="evidence" value="ECO:0007669"/>
    <property type="project" value="InterPro"/>
</dbReference>
<dbReference type="CDD" id="cd00446">
    <property type="entry name" value="GrpE"/>
    <property type="match status" value="1"/>
</dbReference>
<dbReference type="Gene3D" id="3.90.20.20">
    <property type="match status" value="1"/>
</dbReference>
<dbReference type="Gene3D" id="2.30.22.10">
    <property type="entry name" value="Head domain of nucleotide exchange factor GrpE"/>
    <property type="match status" value="1"/>
</dbReference>
<dbReference type="HAMAP" id="MF_01151">
    <property type="entry name" value="GrpE"/>
    <property type="match status" value="1"/>
</dbReference>
<dbReference type="InterPro" id="IPR000740">
    <property type="entry name" value="GrpE"/>
</dbReference>
<dbReference type="InterPro" id="IPR013805">
    <property type="entry name" value="GrpE_coiled_coil"/>
</dbReference>
<dbReference type="InterPro" id="IPR009012">
    <property type="entry name" value="GrpE_head"/>
</dbReference>
<dbReference type="NCBIfam" id="NF010748">
    <property type="entry name" value="PRK14150.1"/>
    <property type="match status" value="1"/>
</dbReference>
<dbReference type="PANTHER" id="PTHR21237">
    <property type="entry name" value="GRPE PROTEIN"/>
    <property type="match status" value="1"/>
</dbReference>
<dbReference type="PANTHER" id="PTHR21237:SF23">
    <property type="entry name" value="GRPE PROTEIN HOMOLOG, MITOCHONDRIAL"/>
    <property type="match status" value="1"/>
</dbReference>
<dbReference type="Pfam" id="PF01025">
    <property type="entry name" value="GrpE"/>
    <property type="match status" value="1"/>
</dbReference>
<dbReference type="PRINTS" id="PR00773">
    <property type="entry name" value="GRPEPROTEIN"/>
</dbReference>
<dbReference type="SUPFAM" id="SSF58014">
    <property type="entry name" value="Coiled-coil domain of nucleotide exchange factor GrpE"/>
    <property type="match status" value="1"/>
</dbReference>
<dbReference type="SUPFAM" id="SSF51064">
    <property type="entry name" value="Head domain of nucleotide exchange factor GrpE"/>
    <property type="match status" value="1"/>
</dbReference>
<dbReference type="PROSITE" id="PS01071">
    <property type="entry name" value="GRPE"/>
    <property type="match status" value="1"/>
</dbReference>
<reference key="1">
    <citation type="journal article" date="2004" name="Nucleic Acids Res.">
        <title>Unique features revealed by the genome sequence of Acinetobacter sp. ADP1, a versatile and naturally transformation competent bacterium.</title>
        <authorList>
            <person name="Barbe V."/>
            <person name="Vallenet D."/>
            <person name="Fonknechten N."/>
            <person name="Kreimeyer A."/>
            <person name="Oztas S."/>
            <person name="Labarre L."/>
            <person name="Cruveiller S."/>
            <person name="Robert C."/>
            <person name="Duprat S."/>
            <person name="Wincker P."/>
            <person name="Ornston L.N."/>
            <person name="Weissenbach J."/>
            <person name="Marliere P."/>
            <person name="Cohen G.N."/>
            <person name="Medigue C."/>
        </authorList>
    </citation>
    <scope>NUCLEOTIDE SEQUENCE [LARGE SCALE GENOMIC DNA]</scope>
    <source>
        <strain>ATCC 33305 / BD413 / ADP1</strain>
    </source>
</reference>
<comment type="function">
    <text evidence="1">Participates actively in the response to hyperosmotic and heat shock by preventing the aggregation of stress-denatured proteins, in association with DnaK and GrpE. It is the nucleotide exchange factor for DnaK and may function as a thermosensor. Unfolded proteins bind initially to DnaJ; upon interaction with the DnaJ-bound protein, DnaK hydrolyzes its bound ATP, resulting in the formation of a stable complex. GrpE releases ADP from DnaK; ATP binding to DnaK triggers the release of the substrate protein, thus completing the reaction cycle. Several rounds of ATP-dependent interactions between DnaJ, DnaK and GrpE are required for fully efficient folding.</text>
</comment>
<comment type="subunit">
    <text evidence="1">Homodimer.</text>
</comment>
<comment type="subcellular location">
    <subcellularLocation>
        <location evidence="1">Cytoplasm</location>
    </subcellularLocation>
</comment>
<comment type="similarity">
    <text evidence="1">Belongs to the GrpE family.</text>
</comment>
<feature type="chain" id="PRO_0000113730" description="Protein GrpE">
    <location>
        <begin position="1"/>
        <end position="184"/>
    </location>
</feature>
<feature type="region of interest" description="Disordered" evidence="2">
    <location>
        <begin position="1"/>
        <end position="35"/>
    </location>
</feature>
<feature type="compositionally biased region" description="Polar residues" evidence="2">
    <location>
        <begin position="1"/>
        <end position="14"/>
    </location>
</feature>
<evidence type="ECO:0000255" key="1">
    <source>
        <dbReference type="HAMAP-Rule" id="MF_01151"/>
    </source>
</evidence>
<evidence type="ECO:0000256" key="2">
    <source>
        <dbReference type="SAM" id="MobiDB-lite"/>
    </source>
</evidence>
<keyword id="KW-0143">Chaperone</keyword>
<keyword id="KW-0963">Cytoplasm</keyword>
<keyword id="KW-0346">Stress response</keyword>
<gene>
    <name evidence="1" type="primary">grpE</name>
    <name type="ordered locus">ACIAD3652</name>
</gene>
<sequence>MANEQNEQSQDLSSEQTTQDHEQTQTEGVEQGAEISVEDLKAQIGKLEESLKLEKARTANAVYEAEKVKERAEREADTAKKFALEKFAKSLLDSVDNLERAIQAAGKEKTPLLEGVELTLKSLTTTLEKFDVVSVDTTNGFNAELHQAVGIDPNAKSGEIGNVLQKGYTLSGRLLRPAMVTVGQ</sequence>
<accession>Q6F6N4</accession>